<evidence type="ECO:0000255" key="1">
    <source>
        <dbReference type="HAMAP-Rule" id="MF_01279"/>
    </source>
</evidence>
<dbReference type="EC" id="3.4.13.9" evidence="1"/>
<dbReference type="EMBL" id="CP000753">
    <property type="protein sequence ID" value="ABS06190.1"/>
    <property type="molecule type" value="Genomic_DNA"/>
</dbReference>
<dbReference type="RefSeq" id="WP_011981995.1">
    <property type="nucleotide sequence ID" value="NC_009665.1"/>
</dbReference>
<dbReference type="SMR" id="A6WHA1"/>
<dbReference type="MEROPS" id="M24.003"/>
<dbReference type="KEGG" id="sbm:Shew185_0017"/>
<dbReference type="HOGENOM" id="CLU_050675_0_0_6"/>
<dbReference type="GO" id="GO:0005829">
    <property type="term" value="C:cytosol"/>
    <property type="evidence" value="ECO:0007669"/>
    <property type="project" value="TreeGrafter"/>
</dbReference>
<dbReference type="GO" id="GO:0004177">
    <property type="term" value="F:aminopeptidase activity"/>
    <property type="evidence" value="ECO:0007669"/>
    <property type="project" value="TreeGrafter"/>
</dbReference>
<dbReference type="GO" id="GO:0046872">
    <property type="term" value="F:metal ion binding"/>
    <property type="evidence" value="ECO:0007669"/>
    <property type="project" value="UniProtKB-KW"/>
</dbReference>
<dbReference type="GO" id="GO:0008235">
    <property type="term" value="F:metalloexopeptidase activity"/>
    <property type="evidence" value="ECO:0007669"/>
    <property type="project" value="UniProtKB-UniRule"/>
</dbReference>
<dbReference type="GO" id="GO:0016795">
    <property type="term" value="F:phosphoric triester hydrolase activity"/>
    <property type="evidence" value="ECO:0007669"/>
    <property type="project" value="InterPro"/>
</dbReference>
<dbReference type="GO" id="GO:0102009">
    <property type="term" value="F:proline dipeptidase activity"/>
    <property type="evidence" value="ECO:0007669"/>
    <property type="project" value="UniProtKB-EC"/>
</dbReference>
<dbReference type="GO" id="GO:0006508">
    <property type="term" value="P:proteolysis"/>
    <property type="evidence" value="ECO:0007669"/>
    <property type="project" value="UniProtKB-KW"/>
</dbReference>
<dbReference type="CDD" id="cd01087">
    <property type="entry name" value="Prolidase"/>
    <property type="match status" value="1"/>
</dbReference>
<dbReference type="Gene3D" id="3.90.230.10">
    <property type="entry name" value="Creatinase/methionine aminopeptidase superfamily"/>
    <property type="match status" value="1"/>
</dbReference>
<dbReference type="Gene3D" id="3.40.350.10">
    <property type="entry name" value="Creatinase/prolidase N-terminal domain"/>
    <property type="match status" value="1"/>
</dbReference>
<dbReference type="HAMAP" id="MF_01279">
    <property type="entry name" value="X_Pro_dipeptid"/>
    <property type="match status" value="1"/>
</dbReference>
<dbReference type="InterPro" id="IPR029149">
    <property type="entry name" value="Creatin/AminoP/Spt16_N"/>
</dbReference>
<dbReference type="InterPro" id="IPR036005">
    <property type="entry name" value="Creatinase/aminopeptidase-like"/>
</dbReference>
<dbReference type="InterPro" id="IPR048819">
    <property type="entry name" value="PepQ_N"/>
</dbReference>
<dbReference type="InterPro" id="IPR000994">
    <property type="entry name" value="Pept_M24"/>
</dbReference>
<dbReference type="InterPro" id="IPR001131">
    <property type="entry name" value="Peptidase_M24B_aminopep-P_CS"/>
</dbReference>
<dbReference type="InterPro" id="IPR052433">
    <property type="entry name" value="X-Pro_dipept-like"/>
</dbReference>
<dbReference type="InterPro" id="IPR022846">
    <property type="entry name" value="X_Pro_dipept"/>
</dbReference>
<dbReference type="NCBIfam" id="NF010133">
    <property type="entry name" value="PRK13607.1"/>
    <property type="match status" value="1"/>
</dbReference>
<dbReference type="PANTHER" id="PTHR43226">
    <property type="entry name" value="XAA-PRO AMINOPEPTIDASE 3"/>
    <property type="match status" value="1"/>
</dbReference>
<dbReference type="PANTHER" id="PTHR43226:SF8">
    <property type="entry name" value="XAA-PRO DIPEPTIDASE"/>
    <property type="match status" value="1"/>
</dbReference>
<dbReference type="Pfam" id="PF21216">
    <property type="entry name" value="PepQ_N"/>
    <property type="match status" value="1"/>
</dbReference>
<dbReference type="Pfam" id="PF00557">
    <property type="entry name" value="Peptidase_M24"/>
    <property type="match status" value="1"/>
</dbReference>
<dbReference type="SUPFAM" id="SSF55920">
    <property type="entry name" value="Creatinase/aminopeptidase"/>
    <property type="match status" value="1"/>
</dbReference>
<dbReference type="SUPFAM" id="SSF53092">
    <property type="entry name" value="Creatinase/prolidase N-terminal domain"/>
    <property type="match status" value="1"/>
</dbReference>
<dbReference type="PROSITE" id="PS00491">
    <property type="entry name" value="PROLINE_PEPTIDASE"/>
    <property type="match status" value="1"/>
</dbReference>
<sequence length="440" mass="50089">MDQLAHHYRAHIAELNRRVAEILSREALSGLVIHSGQPHRMFLDDINYPFKANPHFKAWLPVLDNPNCWLVVNGRDKPQLIFYRPVDFWHKVSDVPDMFWTEYFDIKLLTKADKVAEFLPTDIANWAYLGEHLDVAEVLGFTSRNPDAVMSYLHYHRTTKTEYELECMRRANQIAVQGHLAAKNAFYNGASEFEIQQHYLSAVGQSENEVPYGNIIALNQNAAILHYTALEHQSPAKRLSFLIDAGASYFGYASDITRTYAFEKNRFDELITAMNKAQLELIDMMRPGVRYPDLHLATHAKVAQMLLDFDLATGDAQGLVDQGITSAFFPHGLGHMLGLQVHDVGGFSHDERGTHIAAPEAHPFLRCTRILAPNQVLTMEPGLYIIDTLLNELKQDSRGQQINWQTVDELRPFGGIRIEDNVIVHQDRNENMTRELGLTD</sequence>
<keyword id="KW-0224">Dipeptidase</keyword>
<keyword id="KW-0378">Hydrolase</keyword>
<keyword id="KW-0464">Manganese</keyword>
<keyword id="KW-0479">Metal-binding</keyword>
<keyword id="KW-0482">Metalloprotease</keyword>
<keyword id="KW-0645">Protease</keyword>
<reference key="1">
    <citation type="submission" date="2007-07" db="EMBL/GenBank/DDBJ databases">
        <title>Complete sequence of chromosome of Shewanella baltica OS185.</title>
        <authorList>
            <consortium name="US DOE Joint Genome Institute"/>
            <person name="Copeland A."/>
            <person name="Lucas S."/>
            <person name="Lapidus A."/>
            <person name="Barry K."/>
            <person name="Glavina del Rio T."/>
            <person name="Dalin E."/>
            <person name="Tice H."/>
            <person name="Pitluck S."/>
            <person name="Sims D."/>
            <person name="Brettin T."/>
            <person name="Bruce D."/>
            <person name="Detter J.C."/>
            <person name="Han C."/>
            <person name="Schmutz J."/>
            <person name="Larimer F."/>
            <person name="Land M."/>
            <person name="Hauser L."/>
            <person name="Kyrpides N."/>
            <person name="Mikhailova N."/>
            <person name="Brettar I."/>
            <person name="Rodrigues J."/>
            <person name="Konstantinidis K."/>
            <person name="Tiedje J."/>
            <person name="Richardson P."/>
        </authorList>
    </citation>
    <scope>NUCLEOTIDE SEQUENCE [LARGE SCALE GENOMIC DNA]</scope>
    <source>
        <strain>OS185</strain>
    </source>
</reference>
<proteinExistence type="inferred from homology"/>
<name>PEPQ_SHEB8</name>
<protein>
    <recommendedName>
        <fullName evidence="1">Xaa-Pro dipeptidase</fullName>
        <shortName evidence="1">X-Pro dipeptidase</shortName>
        <ecNumber evidence="1">3.4.13.9</ecNumber>
    </recommendedName>
    <alternativeName>
        <fullName evidence="1">Imidodipeptidase</fullName>
    </alternativeName>
    <alternativeName>
        <fullName evidence="1">Proline dipeptidase</fullName>
        <shortName evidence="1">Prolidase</shortName>
    </alternativeName>
</protein>
<feature type="chain" id="PRO_1000067407" description="Xaa-Pro dipeptidase">
    <location>
        <begin position="1"/>
        <end position="440"/>
    </location>
</feature>
<feature type="binding site" evidence="1">
    <location>
        <position position="244"/>
    </location>
    <ligand>
        <name>Mn(2+)</name>
        <dbReference type="ChEBI" id="CHEBI:29035"/>
        <label>2</label>
    </ligand>
</feature>
<feature type="binding site" evidence="1">
    <location>
        <position position="255"/>
    </location>
    <ligand>
        <name>Mn(2+)</name>
        <dbReference type="ChEBI" id="CHEBI:29035"/>
        <label>1</label>
    </ligand>
</feature>
<feature type="binding site" evidence="1">
    <location>
        <position position="255"/>
    </location>
    <ligand>
        <name>Mn(2+)</name>
        <dbReference type="ChEBI" id="CHEBI:29035"/>
        <label>2</label>
    </ligand>
</feature>
<feature type="binding site" evidence="1">
    <location>
        <position position="335"/>
    </location>
    <ligand>
        <name>Mn(2+)</name>
        <dbReference type="ChEBI" id="CHEBI:29035"/>
        <label>1</label>
    </ligand>
</feature>
<feature type="binding site" evidence="1">
    <location>
        <position position="380"/>
    </location>
    <ligand>
        <name>Mn(2+)</name>
        <dbReference type="ChEBI" id="CHEBI:29035"/>
        <label>1</label>
    </ligand>
</feature>
<feature type="binding site" evidence="1">
    <location>
        <position position="419"/>
    </location>
    <ligand>
        <name>Mn(2+)</name>
        <dbReference type="ChEBI" id="CHEBI:29035"/>
        <label>1</label>
    </ligand>
</feature>
<feature type="binding site" evidence="1">
    <location>
        <position position="419"/>
    </location>
    <ligand>
        <name>Mn(2+)</name>
        <dbReference type="ChEBI" id="CHEBI:29035"/>
        <label>2</label>
    </ligand>
</feature>
<comment type="function">
    <text evidence="1">Splits dipeptides with a prolyl residue in the C-terminal position.</text>
</comment>
<comment type="catalytic activity">
    <reaction evidence="1">
        <text>Xaa-L-Pro dipeptide + H2O = an L-alpha-amino acid + L-proline</text>
        <dbReference type="Rhea" id="RHEA:76407"/>
        <dbReference type="ChEBI" id="CHEBI:15377"/>
        <dbReference type="ChEBI" id="CHEBI:59869"/>
        <dbReference type="ChEBI" id="CHEBI:60039"/>
        <dbReference type="ChEBI" id="CHEBI:195196"/>
        <dbReference type="EC" id="3.4.13.9"/>
    </reaction>
</comment>
<comment type="cofactor">
    <cofactor evidence="1">
        <name>Mn(2+)</name>
        <dbReference type="ChEBI" id="CHEBI:29035"/>
    </cofactor>
    <text evidence="1">Binds 2 manganese ions per subunit.</text>
</comment>
<comment type="similarity">
    <text evidence="1">Belongs to the peptidase M24B family. Bacterial-type prolidase subfamily.</text>
</comment>
<organism>
    <name type="scientific">Shewanella baltica (strain OS185)</name>
    <dbReference type="NCBI Taxonomy" id="402882"/>
    <lineage>
        <taxon>Bacteria</taxon>
        <taxon>Pseudomonadati</taxon>
        <taxon>Pseudomonadota</taxon>
        <taxon>Gammaproteobacteria</taxon>
        <taxon>Alteromonadales</taxon>
        <taxon>Shewanellaceae</taxon>
        <taxon>Shewanella</taxon>
    </lineage>
</organism>
<gene>
    <name evidence="1" type="primary">pepQ</name>
    <name type="ordered locus">Shew185_0017</name>
</gene>
<accession>A6WHA1</accession>